<organism>
    <name type="scientific">Arabidopsis thaliana</name>
    <name type="common">Mouse-ear cress</name>
    <dbReference type="NCBI Taxonomy" id="3702"/>
    <lineage>
        <taxon>Eukaryota</taxon>
        <taxon>Viridiplantae</taxon>
        <taxon>Streptophyta</taxon>
        <taxon>Embryophyta</taxon>
        <taxon>Tracheophyta</taxon>
        <taxon>Spermatophyta</taxon>
        <taxon>Magnoliopsida</taxon>
        <taxon>eudicotyledons</taxon>
        <taxon>Gunneridae</taxon>
        <taxon>Pentapetalae</taxon>
        <taxon>rosids</taxon>
        <taxon>malvids</taxon>
        <taxon>Brassicales</taxon>
        <taxon>Brassicaceae</taxon>
        <taxon>Camelineae</taxon>
        <taxon>Arabidopsis</taxon>
    </lineage>
</organism>
<name>VPS39_ARATH</name>
<feature type="chain" id="PRO_0000444307" description="Vacuolar sorting protein 39">
    <location>
        <begin position="1"/>
        <end position="1000"/>
    </location>
</feature>
<feature type="domain" description="CNH" evidence="2">
    <location>
        <begin position="16"/>
        <end position="282"/>
    </location>
</feature>
<feature type="repeat" description="CHCR" evidence="3">
    <location>
        <begin position="607"/>
        <end position="796"/>
    </location>
</feature>
<feature type="region of interest" description="Disordered" evidence="4">
    <location>
        <begin position="394"/>
        <end position="413"/>
    </location>
</feature>
<feature type="region of interest" description="Disordered" evidence="4">
    <location>
        <begin position="844"/>
        <end position="864"/>
    </location>
</feature>
<feature type="splice variant" id="VSP_059580" description="In isoform 3.">
    <location>
        <begin position="1"/>
        <end position="353"/>
    </location>
</feature>
<feature type="splice variant" id="VSP_059581" description="In isoform 2 and isoform 3.">
    <original>NLLPFLAPLLRNSSE</original>
    <variation>VNVLNLTYTYPITTY</variation>
    <location>
        <begin position="902"/>
        <end position="916"/>
    </location>
</feature>
<feature type="splice variant" id="VSP_059582" description="In isoform 2 and isoform 3.">
    <location>
        <begin position="917"/>
        <end position="1000"/>
    </location>
</feature>
<protein>
    <recommendedName>
        <fullName evidence="7">Vacuolar sorting protein 39</fullName>
    </recommendedName>
    <alternativeName>
        <fullName evidence="8">Protein EMBRYO DEFECTIVE 2754</fullName>
    </alternativeName>
</protein>
<accession>Q8L5Y0</accession>
<accession>A0A1P8B4G5</accession>
<accession>C0Z240</accession>
<accession>O23218</accession>
<accession>Q304A1</accession>
<reference key="1">
    <citation type="journal article" date="1998" name="Nature">
        <title>Analysis of 1.9 Mb of contiguous sequence from chromosome 4 of Arabidopsis thaliana.</title>
        <authorList>
            <person name="Bevan M."/>
            <person name="Bancroft I."/>
            <person name="Bent E."/>
            <person name="Love K."/>
            <person name="Goodman H.M."/>
            <person name="Dean C."/>
            <person name="Bergkamp R."/>
            <person name="Dirkse W."/>
            <person name="van Staveren M."/>
            <person name="Stiekema W."/>
            <person name="Drost L."/>
            <person name="Ridley P."/>
            <person name="Hudson S.-A."/>
            <person name="Patel K."/>
            <person name="Murphy G."/>
            <person name="Piffanelli P."/>
            <person name="Wedler H."/>
            <person name="Wedler E."/>
            <person name="Wambutt R."/>
            <person name="Weitzenegger T."/>
            <person name="Pohl T."/>
            <person name="Terryn N."/>
            <person name="Gielen J."/>
            <person name="Villarroel R."/>
            <person name="De Clercq R."/>
            <person name="van Montagu M."/>
            <person name="Lecharny A."/>
            <person name="Aubourg S."/>
            <person name="Gy I."/>
            <person name="Kreis M."/>
            <person name="Lao N."/>
            <person name="Kavanagh T."/>
            <person name="Hempel S."/>
            <person name="Kotter P."/>
            <person name="Entian K.-D."/>
            <person name="Rieger M."/>
            <person name="Schaefer M."/>
            <person name="Funk B."/>
            <person name="Mueller-Auer S."/>
            <person name="Silvey M."/>
            <person name="James R."/>
            <person name="Monfort A."/>
            <person name="Pons A."/>
            <person name="Puigdomenech P."/>
            <person name="Douka A."/>
            <person name="Voukelatou E."/>
            <person name="Milioni D."/>
            <person name="Hatzopoulos P."/>
            <person name="Piravandi E."/>
            <person name="Obermaier B."/>
            <person name="Hilbert H."/>
            <person name="Duesterhoeft A."/>
            <person name="Moores T."/>
            <person name="Jones J.D.G."/>
            <person name="Eneva T."/>
            <person name="Palme K."/>
            <person name="Benes V."/>
            <person name="Rechmann S."/>
            <person name="Ansorge W."/>
            <person name="Cooke R."/>
            <person name="Berger C."/>
            <person name="Delseny M."/>
            <person name="Voet M."/>
            <person name="Volckaert G."/>
            <person name="Mewes H.-W."/>
            <person name="Klosterman S."/>
            <person name="Schueller C."/>
            <person name="Chalwatzis N."/>
        </authorList>
    </citation>
    <scope>NUCLEOTIDE SEQUENCE [LARGE SCALE GENOMIC DNA]</scope>
    <source>
        <strain>cv. Columbia</strain>
    </source>
</reference>
<reference key="2">
    <citation type="journal article" date="1999" name="Nature">
        <title>Sequence and analysis of chromosome 4 of the plant Arabidopsis thaliana.</title>
        <authorList>
            <person name="Mayer K.F.X."/>
            <person name="Schueller C."/>
            <person name="Wambutt R."/>
            <person name="Murphy G."/>
            <person name="Volckaert G."/>
            <person name="Pohl T."/>
            <person name="Duesterhoeft A."/>
            <person name="Stiekema W."/>
            <person name="Entian K.-D."/>
            <person name="Terryn N."/>
            <person name="Harris B."/>
            <person name="Ansorge W."/>
            <person name="Brandt P."/>
            <person name="Grivell L.A."/>
            <person name="Rieger M."/>
            <person name="Weichselgartner M."/>
            <person name="de Simone V."/>
            <person name="Obermaier B."/>
            <person name="Mache R."/>
            <person name="Mueller M."/>
            <person name="Kreis M."/>
            <person name="Delseny M."/>
            <person name="Puigdomenech P."/>
            <person name="Watson M."/>
            <person name="Schmidtheini T."/>
            <person name="Reichert B."/>
            <person name="Portetelle D."/>
            <person name="Perez-Alonso M."/>
            <person name="Boutry M."/>
            <person name="Bancroft I."/>
            <person name="Vos P."/>
            <person name="Hoheisel J."/>
            <person name="Zimmermann W."/>
            <person name="Wedler H."/>
            <person name="Ridley P."/>
            <person name="Langham S.-A."/>
            <person name="McCullagh B."/>
            <person name="Bilham L."/>
            <person name="Robben J."/>
            <person name="van der Schueren J."/>
            <person name="Grymonprez B."/>
            <person name="Chuang Y.-J."/>
            <person name="Vandenbussche F."/>
            <person name="Braeken M."/>
            <person name="Weltjens I."/>
            <person name="Voet M."/>
            <person name="Bastiaens I."/>
            <person name="Aert R."/>
            <person name="Defoor E."/>
            <person name="Weitzenegger T."/>
            <person name="Bothe G."/>
            <person name="Ramsperger U."/>
            <person name="Hilbert H."/>
            <person name="Braun M."/>
            <person name="Holzer E."/>
            <person name="Brandt A."/>
            <person name="Peters S."/>
            <person name="van Staveren M."/>
            <person name="Dirkse W."/>
            <person name="Mooijman P."/>
            <person name="Klein Lankhorst R."/>
            <person name="Rose M."/>
            <person name="Hauf J."/>
            <person name="Koetter P."/>
            <person name="Berneiser S."/>
            <person name="Hempel S."/>
            <person name="Feldpausch M."/>
            <person name="Lamberth S."/>
            <person name="Van den Daele H."/>
            <person name="De Keyser A."/>
            <person name="Buysshaert C."/>
            <person name="Gielen J."/>
            <person name="Villarroel R."/>
            <person name="De Clercq R."/>
            <person name="van Montagu M."/>
            <person name="Rogers J."/>
            <person name="Cronin A."/>
            <person name="Quail M.A."/>
            <person name="Bray-Allen S."/>
            <person name="Clark L."/>
            <person name="Doggett J."/>
            <person name="Hall S."/>
            <person name="Kay M."/>
            <person name="Lennard N."/>
            <person name="McLay K."/>
            <person name="Mayes R."/>
            <person name="Pettett A."/>
            <person name="Rajandream M.A."/>
            <person name="Lyne M."/>
            <person name="Benes V."/>
            <person name="Rechmann S."/>
            <person name="Borkova D."/>
            <person name="Bloecker H."/>
            <person name="Scharfe M."/>
            <person name="Grimm M."/>
            <person name="Loehnert T.-H."/>
            <person name="Dose S."/>
            <person name="de Haan M."/>
            <person name="Maarse A.C."/>
            <person name="Schaefer M."/>
            <person name="Mueller-Auer S."/>
            <person name="Gabel C."/>
            <person name="Fuchs M."/>
            <person name="Fartmann B."/>
            <person name="Granderath K."/>
            <person name="Dauner D."/>
            <person name="Herzl A."/>
            <person name="Neumann S."/>
            <person name="Argiriou A."/>
            <person name="Vitale D."/>
            <person name="Liguori R."/>
            <person name="Piravandi E."/>
            <person name="Massenet O."/>
            <person name="Quigley F."/>
            <person name="Clabauld G."/>
            <person name="Muendlein A."/>
            <person name="Felber R."/>
            <person name="Schnabl S."/>
            <person name="Hiller R."/>
            <person name="Schmidt W."/>
            <person name="Lecharny A."/>
            <person name="Aubourg S."/>
            <person name="Chefdor F."/>
            <person name="Cooke R."/>
            <person name="Berger C."/>
            <person name="Monfort A."/>
            <person name="Casacuberta E."/>
            <person name="Gibbons T."/>
            <person name="Weber N."/>
            <person name="Vandenbol M."/>
            <person name="Bargues M."/>
            <person name="Terol J."/>
            <person name="Torres A."/>
            <person name="Perez-Perez A."/>
            <person name="Purnelle B."/>
            <person name="Bent E."/>
            <person name="Johnson S."/>
            <person name="Tacon D."/>
            <person name="Jesse T."/>
            <person name="Heijnen L."/>
            <person name="Schwarz S."/>
            <person name="Scholler P."/>
            <person name="Heber S."/>
            <person name="Francs P."/>
            <person name="Bielke C."/>
            <person name="Frishman D."/>
            <person name="Haase D."/>
            <person name="Lemcke K."/>
            <person name="Mewes H.-W."/>
            <person name="Stocker S."/>
            <person name="Zaccaria P."/>
            <person name="Bevan M."/>
            <person name="Wilson R.K."/>
            <person name="de la Bastide M."/>
            <person name="Habermann K."/>
            <person name="Parnell L."/>
            <person name="Dedhia N."/>
            <person name="Gnoj L."/>
            <person name="Schutz K."/>
            <person name="Huang E."/>
            <person name="Spiegel L."/>
            <person name="Sekhon M."/>
            <person name="Murray J."/>
            <person name="Sheet P."/>
            <person name="Cordes M."/>
            <person name="Abu-Threideh J."/>
            <person name="Stoneking T."/>
            <person name="Kalicki J."/>
            <person name="Graves T."/>
            <person name="Harmon G."/>
            <person name="Edwards J."/>
            <person name="Latreille P."/>
            <person name="Courtney L."/>
            <person name="Cloud J."/>
            <person name="Abbott A."/>
            <person name="Scott K."/>
            <person name="Johnson D."/>
            <person name="Minx P."/>
            <person name="Bentley D."/>
            <person name="Fulton B."/>
            <person name="Miller N."/>
            <person name="Greco T."/>
            <person name="Kemp K."/>
            <person name="Kramer J."/>
            <person name="Fulton L."/>
            <person name="Mardis E."/>
            <person name="Dante M."/>
            <person name="Pepin K."/>
            <person name="Hillier L.W."/>
            <person name="Nelson J."/>
            <person name="Spieth J."/>
            <person name="Ryan E."/>
            <person name="Andrews S."/>
            <person name="Geisel C."/>
            <person name="Layman D."/>
            <person name="Du H."/>
            <person name="Ali J."/>
            <person name="Berghoff A."/>
            <person name="Jones K."/>
            <person name="Drone K."/>
            <person name="Cotton M."/>
            <person name="Joshu C."/>
            <person name="Antonoiu B."/>
            <person name="Zidanic M."/>
            <person name="Strong C."/>
            <person name="Sun H."/>
            <person name="Lamar B."/>
            <person name="Yordan C."/>
            <person name="Ma P."/>
            <person name="Zhong J."/>
            <person name="Preston R."/>
            <person name="Vil D."/>
            <person name="Shekher M."/>
            <person name="Matero A."/>
            <person name="Shah R."/>
            <person name="Swaby I.K."/>
            <person name="O'Shaughnessy A."/>
            <person name="Rodriguez M."/>
            <person name="Hoffman J."/>
            <person name="Till S."/>
            <person name="Granat S."/>
            <person name="Shohdy N."/>
            <person name="Hasegawa A."/>
            <person name="Hameed A."/>
            <person name="Lodhi M."/>
            <person name="Johnson A."/>
            <person name="Chen E."/>
            <person name="Marra M.A."/>
            <person name="Martienssen R."/>
            <person name="McCombie W.R."/>
        </authorList>
    </citation>
    <scope>NUCLEOTIDE SEQUENCE [LARGE SCALE GENOMIC DNA]</scope>
    <source>
        <strain>cv. Columbia</strain>
    </source>
</reference>
<reference key="3">
    <citation type="journal article" date="2017" name="Plant J.">
        <title>Araport11: a complete reannotation of the Arabidopsis thaliana reference genome.</title>
        <authorList>
            <person name="Cheng C.Y."/>
            <person name="Krishnakumar V."/>
            <person name="Chan A.P."/>
            <person name="Thibaud-Nissen F."/>
            <person name="Schobel S."/>
            <person name="Town C.D."/>
        </authorList>
    </citation>
    <scope>GENOME REANNOTATION</scope>
    <source>
        <strain>cv. Columbia</strain>
    </source>
</reference>
<reference key="4">
    <citation type="journal article" date="2003" name="Science">
        <title>Empirical analysis of transcriptional activity in the Arabidopsis genome.</title>
        <authorList>
            <person name="Yamada K."/>
            <person name="Lim J."/>
            <person name="Dale J.M."/>
            <person name="Chen H."/>
            <person name="Shinn P."/>
            <person name="Palm C.J."/>
            <person name="Southwick A.M."/>
            <person name="Wu H.C."/>
            <person name="Kim C.J."/>
            <person name="Nguyen M."/>
            <person name="Pham P.K."/>
            <person name="Cheuk R.F."/>
            <person name="Karlin-Newmann G."/>
            <person name="Liu S.X."/>
            <person name="Lam B."/>
            <person name="Sakano H."/>
            <person name="Wu T."/>
            <person name="Yu G."/>
            <person name="Miranda M."/>
            <person name="Quach H.L."/>
            <person name="Tripp M."/>
            <person name="Chang C.H."/>
            <person name="Lee J.M."/>
            <person name="Toriumi M.J."/>
            <person name="Chan M.M."/>
            <person name="Tang C.C."/>
            <person name="Onodera C.S."/>
            <person name="Deng J.M."/>
            <person name="Akiyama K."/>
            <person name="Ansari Y."/>
            <person name="Arakawa T."/>
            <person name="Banh J."/>
            <person name="Banno F."/>
            <person name="Bowser L."/>
            <person name="Brooks S.Y."/>
            <person name="Carninci P."/>
            <person name="Chao Q."/>
            <person name="Choy N."/>
            <person name="Enju A."/>
            <person name="Goldsmith A.D."/>
            <person name="Gurjal M."/>
            <person name="Hansen N.F."/>
            <person name="Hayashizaki Y."/>
            <person name="Johnson-Hopson C."/>
            <person name="Hsuan V.W."/>
            <person name="Iida K."/>
            <person name="Karnes M."/>
            <person name="Khan S."/>
            <person name="Koesema E."/>
            <person name="Ishida J."/>
            <person name="Jiang P.X."/>
            <person name="Jones T."/>
            <person name="Kawai J."/>
            <person name="Kamiya A."/>
            <person name="Meyers C."/>
            <person name="Nakajima M."/>
            <person name="Narusaka M."/>
            <person name="Seki M."/>
            <person name="Sakurai T."/>
            <person name="Satou M."/>
            <person name="Tamse R."/>
            <person name="Vaysberg M."/>
            <person name="Wallender E.K."/>
            <person name="Wong C."/>
            <person name="Yamamura Y."/>
            <person name="Yuan S."/>
            <person name="Shinozaki K."/>
            <person name="Davis R.W."/>
            <person name="Theologis A."/>
            <person name="Ecker J.R."/>
        </authorList>
    </citation>
    <scope>NUCLEOTIDE SEQUENCE [LARGE SCALE MRNA] (ISOFORM 1)</scope>
    <source>
        <strain>cv. Columbia</strain>
    </source>
</reference>
<reference key="5">
    <citation type="journal article" date="2009" name="DNA Res.">
        <title>Analysis of multiple occurrences of alternative splicing events in Arabidopsis thaliana using novel sequenced full-length cDNAs.</title>
        <authorList>
            <person name="Iida K."/>
            <person name="Fukami-Kobayashi K."/>
            <person name="Toyoda A."/>
            <person name="Sakaki Y."/>
            <person name="Kobayashi M."/>
            <person name="Seki M."/>
            <person name="Shinozaki K."/>
        </authorList>
    </citation>
    <scope>NUCLEOTIDE SEQUENCE [LARGE SCALE MRNA] (ISOFORM 3)</scope>
    <source>
        <strain>cv. Columbia</strain>
        <tissue>Rosette leaf</tissue>
    </source>
</reference>
<reference key="6">
    <citation type="journal article" date="2003" name="Mol. Biol. Cell">
        <title>The AtC-VPS protein complex is localized to the tonoplast and the prevacuolar compartment in arabidopsis.</title>
        <authorList>
            <person name="Rojo E."/>
            <person name="Zouhar J."/>
            <person name="Kovaleva V."/>
            <person name="Hong S."/>
            <person name="Raikhel N.V."/>
        </authorList>
    </citation>
    <scope>IDENTIFICATION</scope>
</reference>
<reference key="7">
    <citation type="journal article" date="2004" name="Plant Physiol.">
        <title>Identification of genes required for embryo development in Arabidopsis.</title>
        <authorList>
            <person name="Tzafrir I."/>
            <person name="Pena-Muralla R."/>
            <person name="Dickerman A."/>
            <person name="Berg M."/>
            <person name="Rogers R."/>
            <person name="Hutchens S."/>
            <person name="Sweeney T.C."/>
            <person name="McElver J."/>
            <person name="Aux G."/>
            <person name="Patton D."/>
            <person name="Meinke D."/>
        </authorList>
    </citation>
    <scope>FUNCTION [LARGE SCALE ANALYSIS]</scope>
    <scope>DISRUPTION PHENOTYPE [LARGE SCALE ANALYSIS]</scope>
    <source>
        <strain>cv. Columbia</strain>
    </source>
</reference>
<reference key="8">
    <citation type="journal article" date="2018" name="Proc. Natl. Acad. Sci. U.S.A.">
        <title>Distinct sets of tethering complexes, SNARE complexes, and Rab GTPases mediate membrane fusion at the vacuole in Arabidopsis.</title>
        <authorList>
            <person name="Takemoto K."/>
            <person name="Ebine K."/>
            <person name="Askani J.C."/>
            <person name="Krueger F."/>
            <person name="Gonzalez Z.A."/>
            <person name="Ito E."/>
            <person name="Goh T."/>
            <person name="Schumacher K."/>
            <person name="Nakano A."/>
            <person name="Ueda T."/>
        </authorList>
    </citation>
    <scope>FUNCTION</scope>
    <scope>DISRUPTION PHENOTYPE</scope>
    <scope>INTERACTION WITH VPS11 AND RABG3B</scope>
    <scope>SUBUNIT</scope>
    <scope>IDENTIFICATION BY MASS SPECTROMETRY</scope>
    <scope>SUBCELLULAR LOCATION</scope>
</reference>
<comment type="function">
    <text evidence="1 5 6">Essential protein required during embryogenesis (PubMed:15266054, PubMed:29463724). Believed to act in part as a component of the putative HOPS endosomal tethering complex. HOPS is required for the central vacuole formation (PubMed:29463724). May play a role in clustering and fusion of late endosomes and lysosomes. Plays a role in vesicle-mediated protein trafficking to lysosomal compartments including the endocytic membrane transport and autophagic pathways. Required for fusion of endosomes and autophagosomes with lysosomes (By similarity).</text>
</comment>
<comment type="subunit">
    <text evidence="1 6">Homooligomer (By similarity). Component of the homotypic fusion and vacuole protein sorting (HOPS) complex composed of the class C Vps core proteins VPS11, VCL1, VPS18 and VPS33, which in HOPS further associates with VPS39 and VPS41 (PubMed:29463724). Interacts directly with VPS11. Binds to RABG3B (PubMed:29463724).</text>
</comment>
<comment type="subcellular location">
    <subcellularLocation>
        <location evidence="6">Cytoplasm</location>
    </subcellularLocation>
    <subcellularLocation>
        <location evidence="6">Vacuole membrane</location>
        <topology evidence="6">Peripheral membrane protein</topology>
        <orientation evidence="9">Cytoplasmic side</orientation>
    </subcellularLocation>
    <text evidence="6">Co-localizes with VPS18 and RABG3F at subdomains of the vacuolar membrane with a small number of punctate structures in the cytoplasm. Sometimes observed at the vertex zone, the ring-shaped edge of vacuole-vacuole contact sites. Strong colocalization with VAMP713 at the contact sites of two vacuoles.</text>
</comment>
<comment type="alternative products">
    <event type="alternative splicing"/>
    <isoform>
        <id>Q8L5Y0-1</id>
        <name>1</name>
        <sequence type="displayed"/>
    </isoform>
    <isoform>
        <id>Q8L5Y0-2</id>
        <name>2</name>
        <sequence type="described" ref="VSP_059581 VSP_059582"/>
    </isoform>
    <isoform>
        <id>Q8L5Y0-3</id>
        <name>3</name>
        <sequence type="described" ref="VSP_059580 VSP_059581 VSP_059582"/>
    </isoform>
</comment>
<comment type="disruption phenotype">
    <text evidence="5 6">Defective embryo arrested at cotyledon stage (PubMed:15266054, PubMed:29463724). Heterozygous mutants produce some yellowish seeds with developmentally retarded or abnormally shaped embryos. Conditional dexamethasone (DEX)-inducible mutants exhibit altered vacuolar morphology showing fragmented round vacuoles (PubMed:29463724).</text>
</comment>
<comment type="similarity">
    <text evidence="9">Belongs to the VAM6/VPS39 family.</text>
</comment>
<comment type="sequence caution" evidence="9">
    <conflict type="erroneous gene model prediction">
        <sequence resource="EMBL-CDS" id="CAB16830"/>
    </conflict>
</comment>
<comment type="sequence caution" evidence="9">
    <conflict type="erroneous gene model prediction">
        <sequence resource="EMBL-CDS" id="CAB80329"/>
    </conflict>
</comment>
<comment type="online information" name="Seed defective Arabidopsis mutants">
    <link uri="http://seedgenes.org/MutantList"/>
</comment>
<evidence type="ECO:0000250" key="1">
    <source>
        <dbReference type="UniProtKB" id="Q96JC1"/>
    </source>
</evidence>
<evidence type="ECO:0000255" key="2">
    <source>
        <dbReference type="PROSITE-ProRule" id="PRU00795"/>
    </source>
</evidence>
<evidence type="ECO:0000255" key="3">
    <source>
        <dbReference type="PROSITE-ProRule" id="PRU01006"/>
    </source>
</evidence>
<evidence type="ECO:0000256" key="4">
    <source>
        <dbReference type="SAM" id="MobiDB-lite"/>
    </source>
</evidence>
<evidence type="ECO:0000269" key="5">
    <source>
    </source>
</evidence>
<evidence type="ECO:0000269" key="6">
    <source>
    </source>
</evidence>
<evidence type="ECO:0000303" key="7">
    <source>
    </source>
</evidence>
<evidence type="ECO:0000303" key="8">
    <source>
    </source>
</evidence>
<evidence type="ECO:0000305" key="9"/>
<evidence type="ECO:0000312" key="10">
    <source>
        <dbReference type="Araport" id="AT4G36630"/>
    </source>
</evidence>
<evidence type="ECO:0000312" key="11">
    <source>
        <dbReference type="EMBL" id="CAB16830.1"/>
    </source>
</evidence>
<evidence type="ECO:0000312" key="12">
    <source>
        <dbReference type="EMBL" id="CAB80329.1"/>
    </source>
</evidence>
<dbReference type="EMBL" id="Z99708">
    <property type="protein sequence ID" value="CAB16830.1"/>
    <property type="status" value="ALT_SEQ"/>
    <property type="molecule type" value="Genomic_DNA"/>
</dbReference>
<dbReference type="EMBL" id="AL161589">
    <property type="protein sequence ID" value="CAB80329.1"/>
    <property type="status" value="ALT_SEQ"/>
    <property type="molecule type" value="Genomic_DNA"/>
</dbReference>
<dbReference type="EMBL" id="CP002687">
    <property type="protein sequence ID" value="AEE86679.1"/>
    <property type="molecule type" value="Genomic_DNA"/>
</dbReference>
<dbReference type="EMBL" id="CP002687">
    <property type="protein sequence ID" value="ANM66487.1"/>
    <property type="molecule type" value="Genomic_DNA"/>
</dbReference>
<dbReference type="EMBL" id="AY099879">
    <property type="protein sequence ID" value="AAM20730.1"/>
    <property type="molecule type" value="mRNA"/>
</dbReference>
<dbReference type="EMBL" id="AK318654">
    <property type="protein sequence ID" value="BAH56769.1"/>
    <property type="molecule type" value="mRNA"/>
</dbReference>
<dbReference type="PIR" id="E85432">
    <property type="entry name" value="E85432"/>
</dbReference>
<dbReference type="RefSeq" id="NP_001328378.1">
    <molecule id="Q8L5Y0-2"/>
    <property type="nucleotide sequence ID" value="NM_001342413.1"/>
</dbReference>
<dbReference type="RefSeq" id="NP_195381.6">
    <molecule id="Q8L5Y0-1"/>
    <property type="nucleotide sequence ID" value="NM_119826.8"/>
</dbReference>
<dbReference type="SMR" id="Q8L5Y0"/>
<dbReference type="FunCoup" id="Q8L5Y0">
    <property type="interactions" value="4940"/>
</dbReference>
<dbReference type="STRING" id="3702.Q8L5Y0"/>
<dbReference type="iPTMnet" id="Q8L5Y0"/>
<dbReference type="PaxDb" id="3702-AT4G36630.1"/>
<dbReference type="ProteomicsDB" id="242482">
    <molecule id="Q8L5Y0-1"/>
</dbReference>
<dbReference type="EnsemblPlants" id="AT4G36630.1">
    <molecule id="Q8L5Y0-1"/>
    <property type="protein sequence ID" value="AT4G36630.1"/>
    <property type="gene ID" value="AT4G36630"/>
</dbReference>
<dbReference type="EnsemblPlants" id="AT4G36630.2">
    <molecule id="Q8L5Y0-2"/>
    <property type="protein sequence ID" value="AT4G36630.2"/>
    <property type="gene ID" value="AT4G36630"/>
</dbReference>
<dbReference type="GeneID" id="829815"/>
<dbReference type="Gramene" id="AT4G36630.1">
    <molecule id="Q8L5Y0-1"/>
    <property type="protein sequence ID" value="AT4G36630.1"/>
    <property type="gene ID" value="AT4G36630"/>
</dbReference>
<dbReference type="Gramene" id="AT4G36630.2">
    <molecule id="Q8L5Y0-2"/>
    <property type="protein sequence ID" value="AT4G36630.2"/>
    <property type="gene ID" value="AT4G36630"/>
</dbReference>
<dbReference type="KEGG" id="ath:AT4G36630"/>
<dbReference type="Araport" id="AT4G36630"/>
<dbReference type="TAIR" id="AT4G36630">
    <property type="gene designation" value="EMB2754"/>
</dbReference>
<dbReference type="eggNOG" id="KOG2063">
    <property type="taxonomic scope" value="Eukaryota"/>
</dbReference>
<dbReference type="HOGENOM" id="CLU_004190_0_0_1"/>
<dbReference type="InParanoid" id="Q8L5Y0"/>
<dbReference type="OMA" id="EEYCNQV"/>
<dbReference type="OrthoDB" id="5325112at2759"/>
<dbReference type="PhylomeDB" id="Q8L5Y0"/>
<dbReference type="PRO" id="PR:Q8L5Y0"/>
<dbReference type="Proteomes" id="UP000006548">
    <property type="component" value="Chromosome 4"/>
</dbReference>
<dbReference type="ExpressionAtlas" id="Q8L5Y0">
    <property type="expression patterns" value="baseline and differential"/>
</dbReference>
<dbReference type="GO" id="GO:0005737">
    <property type="term" value="C:cytoplasm"/>
    <property type="evidence" value="ECO:0000314"/>
    <property type="project" value="UniProtKB"/>
</dbReference>
<dbReference type="GO" id="GO:0030897">
    <property type="term" value="C:HOPS complex"/>
    <property type="evidence" value="ECO:0000314"/>
    <property type="project" value="UniProtKB"/>
</dbReference>
<dbReference type="GO" id="GO:0009705">
    <property type="term" value="C:plant-type vacuole membrane"/>
    <property type="evidence" value="ECO:0000314"/>
    <property type="project" value="UniProtKB"/>
</dbReference>
<dbReference type="GO" id="GO:0005886">
    <property type="term" value="C:plasma membrane"/>
    <property type="evidence" value="ECO:0007005"/>
    <property type="project" value="TAIR"/>
</dbReference>
<dbReference type="GO" id="GO:0009506">
    <property type="term" value="C:plasmodesma"/>
    <property type="evidence" value="ECO:0007005"/>
    <property type="project" value="TAIR"/>
</dbReference>
<dbReference type="GO" id="GO:0006914">
    <property type="term" value="P:autophagy"/>
    <property type="evidence" value="ECO:0007669"/>
    <property type="project" value="UniProtKB-KW"/>
</dbReference>
<dbReference type="GO" id="GO:0015031">
    <property type="term" value="P:protein transport"/>
    <property type="evidence" value="ECO:0007669"/>
    <property type="project" value="UniProtKB-KW"/>
</dbReference>
<dbReference type="GO" id="GO:0007033">
    <property type="term" value="P:vacuole organization"/>
    <property type="evidence" value="ECO:0000315"/>
    <property type="project" value="UniProtKB"/>
</dbReference>
<dbReference type="GO" id="GO:0016192">
    <property type="term" value="P:vesicle-mediated transport"/>
    <property type="evidence" value="ECO:0007669"/>
    <property type="project" value="InterPro"/>
</dbReference>
<dbReference type="InterPro" id="IPR001180">
    <property type="entry name" value="CNH_dom"/>
</dbReference>
<dbReference type="InterPro" id="IPR032914">
    <property type="entry name" value="Vam6/VPS39/TRAP1"/>
</dbReference>
<dbReference type="InterPro" id="IPR019452">
    <property type="entry name" value="VPS39/TGF_beta_rcpt-assoc_1"/>
</dbReference>
<dbReference type="InterPro" id="IPR019453">
    <property type="entry name" value="VPS39/TGFA1_Znf"/>
</dbReference>
<dbReference type="InterPro" id="IPR036322">
    <property type="entry name" value="WD40_repeat_dom_sf"/>
</dbReference>
<dbReference type="PANTHER" id="PTHR12894">
    <property type="entry name" value="CNH DOMAIN CONTAINING"/>
    <property type="match status" value="1"/>
</dbReference>
<dbReference type="PANTHER" id="PTHR12894:SF27">
    <property type="entry name" value="TRANSFORMING GROWTH FACTOR-BETA RECEPTOR-ASSOCIATED PROTEIN 1"/>
    <property type="match status" value="1"/>
</dbReference>
<dbReference type="Pfam" id="PF00780">
    <property type="entry name" value="CNH"/>
    <property type="match status" value="1"/>
</dbReference>
<dbReference type="Pfam" id="PF10366">
    <property type="entry name" value="Vps39_1"/>
    <property type="match status" value="1"/>
</dbReference>
<dbReference type="Pfam" id="PF10367">
    <property type="entry name" value="zf-Vps39_C"/>
    <property type="match status" value="1"/>
</dbReference>
<dbReference type="SUPFAM" id="SSF50978">
    <property type="entry name" value="WD40 repeat-like"/>
    <property type="match status" value="1"/>
</dbReference>
<dbReference type="PROSITE" id="PS50219">
    <property type="entry name" value="CNH"/>
    <property type="match status" value="1"/>
</dbReference>
<keyword id="KW-0025">Alternative splicing</keyword>
<keyword id="KW-0072">Autophagy</keyword>
<keyword id="KW-0963">Cytoplasm</keyword>
<keyword id="KW-0472">Membrane</keyword>
<keyword id="KW-0653">Protein transport</keyword>
<keyword id="KW-1185">Reference proteome</keyword>
<keyword id="KW-0813">Transport</keyword>
<keyword id="KW-0926">Vacuole</keyword>
<sequence>MVHNAYDSFQLLKDCPARIDAVESYGSKLFAGCYDGSLRIYSPPESSASDPSELHQETYVLEKTVAGFSKKPIVAMEVLASRELLLSLSESIAFHGLPNLETVAVITKAKGANAYSWDDRRGFLCFSRQKRVCVFKHDGGGGFVEVRDYGVPDTVKSISWCGENICLGIKKEYVILNTANGTLSEVFPSGRVAPPLVISLPSGELILGKENIGVFVDQNGKLLQTERICWSEAPTSIVIQNPYAIALLPRRVEVRLLRSPYPLIQTIVLQNIRRLVKSNNAVIVGLDNSVYVLFPVSIGAQIVQLTASGNFEEALALCKVLPPDESSLRAAKESSIHTRFAHYLFENGSYEEAMEHFLASQVDITHVLSMYPSIILPKTTIIPQPDKMVDISGDEASLSRGSSGISDDMESSSPRYFLESEDNADLESKKMSHNTLMALIKYLLKRRPAVIEKATSEGTEEVISDAVGKTYGANDSSKSKKSSKGRGMIPLNSGAREMAAILDTALLQALLHTGQSGAAIELLKGVNYSDVKICEEILMKSKNYSALLELFKSNSMHHEALKLLNQLADESKTNQSQTDVTQIFSPELIIEYLKPLCRTDPMLVLEYSMLVLESCPTQTIDLFLSGNISADLVNSYLKQHAPNMQGRYLELMMAMNDTAVSGNLQNEMVQIYLSEVLDLYAAKSAQQKWDEKDHPPERKKLLSALESISGYSPQPLLKRLPRDALYEERAVILGKMNQHELALSIYVHKLHAPDLALAYCDRIYESVTYLPSGKPSSNIYLTVLQIYLNPKKSAKDFAKRIVALGSFESSDTTKMMDSVLSSKAKGGRSKKIVAIEGAEDMRVGLSSSTDSGRSDVDTEEPLEEGDSTVMISEVLDLLSQRWERINGAQALKLLPRETKLHNLLPFLAPLLRNSSEAHRNFSVIKSLRQSENLQVKEELYKHRKGVAQVTSESMCSLCNKKIGTSVFAVYPNGKTLVHFVCFRDSQGMKAVSKTTHGRRR</sequence>
<gene>
    <name evidence="7" type="primary">VPS39</name>
    <name evidence="8" type="synonym">EMB2754</name>
    <name evidence="10" type="ordered locus">At4g36630</name>
    <name evidence="12" type="ORF">AP22.59</name>
    <name evidence="11" type="ORF">C7A10.730</name>
</gene>
<proteinExistence type="evidence at protein level"/>